<gene>
    <name evidence="1" type="primary">folD</name>
    <name type="ordered locus">BMA10229_A3085</name>
</gene>
<proteinExistence type="inferred from homology"/>
<feature type="chain" id="PRO_1000069230" description="Bifunctional protein FolD">
    <location>
        <begin position="1"/>
        <end position="285"/>
    </location>
</feature>
<feature type="binding site" evidence="1">
    <location>
        <begin position="165"/>
        <end position="167"/>
    </location>
    <ligand>
        <name>NADP(+)</name>
        <dbReference type="ChEBI" id="CHEBI:58349"/>
    </ligand>
</feature>
<feature type="binding site" evidence="1">
    <location>
        <position position="190"/>
    </location>
    <ligand>
        <name>NADP(+)</name>
        <dbReference type="ChEBI" id="CHEBI:58349"/>
    </ligand>
</feature>
<reference key="1">
    <citation type="journal article" date="2010" name="Genome Biol. Evol.">
        <title>Continuing evolution of Burkholderia mallei through genome reduction and large-scale rearrangements.</title>
        <authorList>
            <person name="Losada L."/>
            <person name="Ronning C.M."/>
            <person name="DeShazer D."/>
            <person name="Woods D."/>
            <person name="Fedorova N."/>
            <person name="Kim H.S."/>
            <person name="Shabalina S.A."/>
            <person name="Pearson T.R."/>
            <person name="Brinkac L."/>
            <person name="Tan P."/>
            <person name="Nandi T."/>
            <person name="Crabtree J."/>
            <person name="Badger J."/>
            <person name="Beckstrom-Sternberg S."/>
            <person name="Saqib M."/>
            <person name="Schutzer S.E."/>
            <person name="Keim P."/>
            <person name="Nierman W.C."/>
        </authorList>
    </citation>
    <scope>NUCLEOTIDE SEQUENCE [LARGE SCALE GENOMIC DNA]</scope>
    <source>
        <strain>NCTC 10229</strain>
    </source>
</reference>
<name>FOLD_BURM9</name>
<organism>
    <name type="scientific">Burkholderia mallei (strain NCTC 10229)</name>
    <dbReference type="NCBI Taxonomy" id="412022"/>
    <lineage>
        <taxon>Bacteria</taxon>
        <taxon>Pseudomonadati</taxon>
        <taxon>Pseudomonadota</taxon>
        <taxon>Betaproteobacteria</taxon>
        <taxon>Burkholderiales</taxon>
        <taxon>Burkholderiaceae</taxon>
        <taxon>Burkholderia</taxon>
        <taxon>pseudomallei group</taxon>
    </lineage>
</organism>
<keyword id="KW-0028">Amino-acid biosynthesis</keyword>
<keyword id="KW-0368">Histidine biosynthesis</keyword>
<keyword id="KW-0378">Hydrolase</keyword>
<keyword id="KW-0486">Methionine biosynthesis</keyword>
<keyword id="KW-0511">Multifunctional enzyme</keyword>
<keyword id="KW-0521">NADP</keyword>
<keyword id="KW-0554">One-carbon metabolism</keyword>
<keyword id="KW-0560">Oxidoreductase</keyword>
<keyword id="KW-0658">Purine biosynthesis</keyword>
<comment type="function">
    <text evidence="1">Catalyzes the oxidation of 5,10-methylenetetrahydrofolate to 5,10-methenyltetrahydrofolate and then the hydrolysis of 5,10-methenyltetrahydrofolate to 10-formyltetrahydrofolate.</text>
</comment>
<comment type="catalytic activity">
    <reaction evidence="1">
        <text>(6R)-5,10-methylene-5,6,7,8-tetrahydrofolate + NADP(+) = (6R)-5,10-methenyltetrahydrofolate + NADPH</text>
        <dbReference type="Rhea" id="RHEA:22812"/>
        <dbReference type="ChEBI" id="CHEBI:15636"/>
        <dbReference type="ChEBI" id="CHEBI:57455"/>
        <dbReference type="ChEBI" id="CHEBI:57783"/>
        <dbReference type="ChEBI" id="CHEBI:58349"/>
        <dbReference type="EC" id="1.5.1.5"/>
    </reaction>
</comment>
<comment type="catalytic activity">
    <reaction evidence="1">
        <text>(6R)-5,10-methenyltetrahydrofolate + H2O = (6R)-10-formyltetrahydrofolate + H(+)</text>
        <dbReference type="Rhea" id="RHEA:23700"/>
        <dbReference type="ChEBI" id="CHEBI:15377"/>
        <dbReference type="ChEBI" id="CHEBI:15378"/>
        <dbReference type="ChEBI" id="CHEBI:57455"/>
        <dbReference type="ChEBI" id="CHEBI:195366"/>
        <dbReference type="EC" id="3.5.4.9"/>
    </reaction>
</comment>
<comment type="pathway">
    <text evidence="1">One-carbon metabolism; tetrahydrofolate interconversion.</text>
</comment>
<comment type="subunit">
    <text evidence="1">Homodimer.</text>
</comment>
<comment type="similarity">
    <text evidence="1">Belongs to the tetrahydrofolate dehydrogenase/cyclohydrolase family.</text>
</comment>
<protein>
    <recommendedName>
        <fullName evidence="1">Bifunctional protein FolD</fullName>
    </recommendedName>
    <domain>
        <recommendedName>
            <fullName evidence="1">Methylenetetrahydrofolate dehydrogenase</fullName>
            <ecNumber evidence="1">1.5.1.5</ecNumber>
        </recommendedName>
    </domain>
    <domain>
        <recommendedName>
            <fullName evidence="1">Methenyltetrahydrofolate cyclohydrolase</fullName>
            <ecNumber evidence="1">3.5.4.9</ecNumber>
        </recommendedName>
    </domain>
</protein>
<dbReference type="EC" id="1.5.1.5" evidence="1"/>
<dbReference type="EC" id="3.5.4.9" evidence="1"/>
<dbReference type="EMBL" id="CP000546">
    <property type="protein sequence ID" value="ABN01373.1"/>
    <property type="molecule type" value="Genomic_DNA"/>
</dbReference>
<dbReference type="RefSeq" id="WP_004192825.1">
    <property type="nucleotide sequence ID" value="NC_008836.1"/>
</dbReference>
<dbReference type="SMR" id="A2SAQ8"/>
<dbReference type="GeneID" id="92979446"/>
<dbReference type="KEGG" id="bml:BMA10229_A3085"/>
<dbReference type="HOGENOM" id="CLU_034045_2_1_4"/>
<dbReference type="UniPathway" id="UPA00193"/>
<dbReference type="Proteomes" id="UP000002283">
    <property type="component" value="Chromosome I"/>
</dbReference>
<dbReference type="GO" id="GO:0005829">
    <property type="term" value="C:cytosol"/>
    <property type="evidence" value="ECO:0007669"/>
    <property type="project" value="TreeGrafter"/>
</dbReference>
<dbReference type="GO" id="GO:0004477">
    <property type="term" value="F:methenyltetrahydrofolate cyclohydrolase activity"/>
    <property type="evidence" value="ECO:0007669"/>
    <property type="project" value="UniProtKB-UniRule"/>
</dbReference>
<dbReference type="GO" id="GO:0004488">
    <property type="term" value="F:methylenetetrahydrofolate dehydrogenase (NADP+) activity"/>
    <property type="evidence" value="ECO:0007669"/>
    <property type="project" value="UniProtKB-UniRule"/>
</dbReference>
<dbReference type="GO" id="GO:0000105">
    <property type="term" value="P:L-histidine biosynthetic process"/>
    <property type="evidence" value="ECO:0007669"/>
    <property type="project" value="UniProtKB-KW"/>
</dbReference>
<dbReference type="GO" id="GO:0009086">
    <property type="term" value="P:methionine biosynthetic process"/>
    <property type="evidence" value="ECO:0007669"/>
    <property type="project" value="UniProtKB-KW"/>
</dbReference>
<dbReference type="GO" id="GO:0006164">
    <property type="term" value="P:purine nucleotide biosynthetic process"/>
    <property type="evidence" value="ECO:0007669"/>
    <property type="project" value="UniProtKB-KW"/>
</dbReference>
<dbReference type="GO" id="GO:0035999">
    <property type="term" value="P:tetrahydrofolate interconversion"/>
    <property type="evidence" value="ECO:0007669"/>
    <property type="project" value="UniProtKB-UniRule"/>
</dbReference>
<dbReference type="CDD" id="cd01080">
    <property type="entry name" value="NAD_bind_m-THF_DH_Cyclohyd"/>
    <property type="match status" value="1"/>
</dbReference>
<dbReference type="FunFam" id="3.40.50.720:FF:000094">
    <property type="entry name" value="Bifunctional protein FolD"/>
    <property type="match status" value="1"/>
</dbReference>
<dbReference type="FunFam" id="3.40.50.10860:FF:000005">
    <property type="entry name" value="C-1-tetrahydrofolate synthase, cytoplasmic, putative"/>
    <property type="match status" value="1"/>
</dbReference>
<dbReference type="Gene3D" id="3.40.50.10860">
    <property type="entry name" value="Leucine Dehydrogenase, chain A, domain 1"/>
    <property type="match status" value="1"/>
</dbReference>
<dbReference type="Gene3D" id="3.40.50.720">
    <property type="entry name" value="NAD(P)-binding Rossmann-like Domain"/>
    <property type="match status" value="1"/>
</dbReference>
<dbReference type="HAMAP" id="MF_01576">
    <property type="entry name" value="THF_DHG_CYH"/>
    <property type="match status" value="1"/>
</dbReference>
<dbReference type="InterPro" id="IPR046346">
    <property type="entry name" value="Aminoacid_DH-like_N_sf"/>
</dbReference>
<dbReference type="InterPro" id="IPR036291">
    <property type="entry name" value="NAD(P)-bd_dom_sf"/>
</dbReference>
<dbReference type="InterPro" id="IPR000672">
    <property type="entry name" value="THF_DH/CycHdrlase"/>
</dbReference>
<dbReference type="InterPro" id="IPR020630">
    <property type="entry name" value="THF_DH/CycHdrlase_cat_dom"/>
</dbReference>
<dbReference type="InterPro" id="IPR020867">
    <property type="entry name" value="THF_DH/CycHdrlase_CS"/>
</dbReference>
<dbReference type="InterPro" id="IPR020631">
    <property type="entry name" value="THF_DH/CycHdrlase_NAD-bd_dom"/>
</dbReference>
<dbReference type="NCBIfam" id="NF008058">
    <property type="entry name" value="PRK10792.1"/>
    <property type="match status" value="1"/>
</dbReference>
<dbReference type="NCBIfam" id="NF010783">
    <property type="entry name" value="PRK14186.1"/>
    <property type="match status" value="1"/>
</dbReference>
<dbReference type="NCBIfam" id="NF010786">
    <property type="entry name" value="PRK14189.1"/>
    <property type="match status" value="1"/>
</dbReference>
<dbReference type="PANTHER" id="PTHR48099:SF5">
    <property type="entry name" value="C-1-TETRAHYDROFOLATE SYNTHASE, CYTOPLASMIC"/>
    <property type="match status" value="1"/>
</dbReference>
<dbReference type="PANTHER" id="PTHR48099">
    <property type="entry name" value="C-1-TETRAHYDROFOLATE SYNTHASE, CYTOPLASMIC-RELATED"/>
    <property type="match status" value="1"/>
</dbReference>
<dbReference type="Pfam" id="PF00763">
    <property type="entry name" value="THF_DHG_CYH"/>
    <property type="match status" value="1"/>
</dbReference>
<dbReference type="Pfam" id="PF02882">
    <property type="entry name" value="THF_DHG_CYH_C"/>
    <property type="match status" value="1"/>
</dbReference>
<dbReference type="PRINTS" id="PR00085">
    <property type="entry name" value="THFDHDRGNASE"/>
</dbReference>
<dbReference type="SUPFAM" id="SSF53223">
    <property type="entry name" value="Aminoacid dehydrogenase-like, N-terminal domain"/>
    <property type="match status" value="1"/>
</dbReference>
<dbReference type="SUPFAM" id="SSF51735">
    <property type="entry name" value="NAD(P)-binding Rossmann-fold domains"/>
    <property type="match status" value="1"/>
</dbReference>
<dbReference type="PROSITE" id="PS00766">
    <property type="entry name" value="THF_DHG_CYH_1"/>
    <property type="match status" value="1"/>
</dbReference>
<dbReference type="PROSITE" id="PS00767">
    <property type="entry name" value="THF_DHG_CYH_2"/>
    <property type="match status" value="1"/>
</dbReference>
<sequence>MTATLIDGNALSKTLRAQAAERAAALAARGHRPGLAVILVGDNPASEVYVRNKIKACEDNGFFSLKDRYPATLSEPELLARIDELNRDPKIHGILVQLPLPAHIDSHKVIEAIAPEKDVDGFHVANAGALLTGKPLFRPCTPYGVMKMFEAYKIPLQGANAVVIGRSNIVGKPMALLLLEAGATVTICHSKTCELAAHTRAADIVVAAVGKRNVLTADMVKPGATVIDVGMNRNDEGKLCGDVDFAGVSQVAGHITPVPGGVGPMTITMLLVNTIEAAERAAAAA</sequence>
<evidence type="ECO:0000255" key="1">
    <source>
        <dbReference type="HAMAP-Rule" id="MF_01576"/>
    </source>
</evidence>
<accession>A2SAQ8</accession>